<reference key="1">
    <citation type="journal article" date="2008" name="J. Bacteriol.">
        <title>Complete genome sequence of the soil actinomycete Kocuria rhizophila.</title>
        <authorList>
            <person name="Takarada H."/>
            <person name="Sekine M."/>
            <person name="Kosugi H."/>
            <person name="Matsuo Y."/>
            <person name="Fujisawa T."/>
            <person name="Omata S."/>
            <person name="Kishi E."/>
            <person name="Shimizu A."/>
            <person name="Tsukatani N."/>
            <person name="Tanikawa S."/>
            <person name="Fujita N."/>
            <person name="Harayama S."/>
        </authorList>
    </citation>
    <scope>NUCLEOTIDE SEQUENCE [LARGE SCALE GENOMIC DNA]</scope>
    <source>
        <strain>ATCC 9341 / DSM 348 / NBRC 103217 / DC2201</strain>
    </source>
</reference>
<organism>
    <name type="scientific">Kocuria rhizophila (strain ATCC 9341 / DSM 348 / NBRC 103217 / DC2201)</name>
    <dbReference type="NCBI Taxonomy" id="378753"/>
    <lineage>
        <taxon>Bacteria</taxon>
        <taxon>Bacillati</taxon>
        <taxon>Actinomycetota</taxon>
        <taxon>Actinomycetes</taxon>
        <taxon>Micrococcales</taxon>
        <taxon>Micrococcaceae</taxon>
        <taxon>Kocuria</taxon>
    </lineage>
</organism>
<keyword id="KW-1017">Isopeptide bond</keyword>
<keyword id="KW-1185">Reference proteome</keyword>
<keyword id="KW-0833">Ubl conjugation pathway</keyword>
<gene>
    <name evidence="1" type="primary">pup</name>
    <name type="ordered locus">KRH_13860</name>
</gene>
<sequence length="68" mass="7217">MAQERIFGTGSRREDEPDTPAPVDPPVSGAAQAQRDMQGTDDLLAEIDGVLETNAEAFVKGFVQKGGQ</sequence>
<name>PUP_KOCRD</name>
<evidence type="ECO:0000255" key="1">
    <source>
        <dbReference type="HAMAP-Rule" id="MF_02106"/>
    </source>
</evidence>
<evidence type="ECO:0000256" key="2">
    <source>
        <dbReference type="SAM" id="MobiDB-lite"/>
    </source>
</evidence>
<accession>B2GIP0</accession>
<dbReference type="EMBL" id="AP009152">
    <property type="protein sequence ID" value="BAG29733.1"/>
    <property type="molecule type" value="Genomic_DNA"/>
</dbReference>
<dbReference type="RefSeq" id="WP_012398454.1">
    <property type="nucleotide sequence ID" value="NC_010617.1"/>
</dbReference>
<dbReference type="SMR" id="B2GIP0"/>
<dbReference type="STRING" id="378753.KRH_13860"/>
<dbReference type="KEGG" id="krh:KRH_13860"/>
<dbReference type="eggNOG" id="ENOG50333JS">
    <property type="taxonomic scope" value="Bacteria"/>
</dbReference>
<dbReference type="HOGENOM" id="CLU_183816_2_0_11"/>
<dbReference type="OrthoDB" id="3254977at2"/>
<dbReference type="UniPathway" id="UPA00997"/>
<dbReference type="Proteomes" id="UP000008838">
    <property type="component" value="Chromosome"/>
</dbReference>
<dbReference type="GO" id="GO:0070628">
    <property type="term" value="F:proteasome binding"/>
    <property type="evidence" value="ECO:0007669"/>
    <property type="project" value="UniProtKB-UniRule"/>
</dbReference>
<dbReference type="GO" id="GO:0031386">
    <property type="term" value="F:protein tag activity"/>
    <property type="evidence" value="ECO:0007669"/>
    <property type="project" value="UniProtKB-UniRule"/>
</dbReference>
<dbReference type="GO" id="GO:0019941">
    <property type="term" value="P:modification-dependent protein catabolic process"/>
    <property type="evidence" value="ECO:0007669"/>
    <property type="project" value="UniProtKB-UniRule"/>
</dbReference>
<dbReference type="GO" id="GO:0010498">
    <property type="term" value="P:proteasomal protein catabolic process"/>
    <property type="evidence" value="ECO:0007669"/>
    <property type="project" value="UniProtKB-UniRule"/>
</dbReference>
<dbReference type="GO" id="GO:0070490">
    <property type="term" value="P:protein pupylation"/>
    <property type="evidence" value="ECO:0007669"/>
    <property type="project" value="UniProtKB-UniRule"/>
</dbReference>
<dbReference type="HAMAP" id="MF_02106">
    <property type="entry name" value="Pup"/>
    <property type="match status" value="1"/>
</dbReference>
<dbReference type="InterPro" id="IPR008515">
    <property type="entry name" value="Ubiquitin-like_Pup"/>
</dbReference>
<dbReference type="NCBIfam" id="TIGR03687">
    <property type="entry name" value="pupylate_cterm"/>
    <property type="match status" value="1"/>
</dbReference>
<dbReference type="Pfam" id="PF05639">
    <property type="entry name" value="Pup"/>
    <property type="match status" value="1"/>
</dbReference>
<protein>
    <recommendedName>
        <fullName evidence="1">Prokaryotic ubiquitin-like protein Pup</fullName>
    </recommendedName>
    <alternativeName>
        <fullName evidence="1">Bacterial ubiquitin-like modifier</fullName>
    </alternativeName>
</protein>
<proteinExistence type="inferred from homology"/>
<comment type="function">
    <text evidence="1">Protein modifier that is covalently attached to lysine residues of substrate proteins, thereby targeting them for proteasomal degradation. The tagging system is termed pupylation.</text>
</comment>
<comment type="pathway">
    <text evidence="1">Protein degradation; proteasomal Pup-dependent pathway.</text>
</comment>
<comment type="subunit">
    <text evidence="1">Strongly interacts with the proteasome-associated ATPase ARC through a hydrophobic interface; the interacting region of Pup lies in its C-terminal half. There is one Pup binding site per ARC hexamer ring.</text>
</comment>
<comment type="domain">
    <text evidence="1">The N-terminal unstructured half of Pup provides a signal required to initiate unfolding and degradation by the proteasome but is not needed for pupylation, while the C-terminal helical half of Pup interacts with ARC to target proteins to the proteasome.</text>
</comment>
<comment type="PTM">
    <text evidence="1">Is modified by deamidation of its C-terminal glutamine to glutamate by the deamidase Dop, a prerequisite to the subsequent pupylation process.</text>
</comment>
<comment type="similarity">
    <text evidence="1">Belongs to the prokaryotic ubiquitin-like protein family.</text>
</comment>
<feature type="chain" id="PRO_0000390585" description="Prokaryotic ubiquitin-like protein Pup">
    <location>
        <begin position="1"/>
        <end position="68"/>
    </location>
</feature>
<feature type="region of interest" description="Disordered" evidence="2">
    <location>
        <begin position="1"/>
        <end position="37"/>
    </location>
</feature>
<feature type="region of interest" description="ARC ATPase binding" evidence="1">
    <location>
        <begin position="24"/>
        <end position="62"/>
    </location>
</feature>
<feature type="modified residue" description="Deamidated glutamine" evidence="1">
    <location>
        <position position="68"/>
    </location>
</feature>
<feature type="cross-link" description="Isoglutamyl lysine isopeptide (Gln-Lys) (interchain with K-? in acceptor proteins)" evidence="1">
    <location>
        <position position="68"/>
    </location>
</feature>